<reference key="1">
    <citation type="journal article" date="2008" name="J. Bacteriol.">
        <title>The pangenome structure of Escherichia coli: comparative genomic analysis of E. coli commensal and pathogenic isolates.</title>
        <authorList>
            <person name="Rasko D.A."/>
            <person name="Rosovitz M.J."/>
            <person name="Myers G.S.A."/>
            <person name="Mongodin E.F."/>
            <person name="Fricke W.F."/>
            <person name="Gajer P."/>
            <person name="Crabtree J."/>
            <person name="Sebaihia M."/>
            <person name="Thomson N.R."/>
            <person name="Chaudhuri R."/>
            <person name="Henderson I.R."/>
            <person name="Sperandio V."/>
            <person name="Ravel J."/>
        </authorList>
    </citation>
    <scope>NUCLEOTIDE SEQUENCE [LARGE SCALE GENOMIC DNA]</scope>
    <source>
        <strain>HS</strain>
    </source>
</reference>
<protein>
    <recommendedName>
        <fullName evidence="1">Altronate oxidoreductase</fullName>
        <ecNumber evidence="1">1.1.1.58</ecNumber>
    </recommendedName>
    <alternativeName>
        <fullName evidence="1">Tagaturonate dehydrogenase</fullName>
    </alternativeName>
    <alternativeName>
        <fullName evidence="1">Tagaturonate reductase</fullName>
    </alternativeName>
</protein>
<comment type="catalytic activity">
    <reaction evidence="1">
        <text>D-altronate + NAD(+) = keto-D-tagaturonate + NADH + H(+)</text>
        <dbReference type="Rhea" id="RHEA:17813"/>
        <dbReference type="ChEBI" id="CHEBI:15378"/>
        <dbReference type="ChEBI" id="CHEBI:17360"/>
        <dbReference type="ChEBI" id="CHEBI:17886"/>
        <dbReference type="ChEBI" id="CHEBI:57540"/>
        <dbReference type="ChEBI" id="CHEBI:57945"/>
        <dbReference type="EC" id="1.1.1.58"/>
    </reaction>
</comment>
<comment type="pathway">
    <text evidence="1">Carbohydrate metabolism; pentose and glucuronate interconversion.</text>
</comment>
<comment type="similarity">
    <text evidence="1">Belongs to the mannitol dehydrogenase family. UxaB subfamily.</text>
</comment>
<gene>
    <name evidence="1" type="primary">uxaB</name>
    <name type="ordered locus">EcHS_A1603</name>
</gene>
<dbReference type="EC" id="1.1.1.58" evidence="1"/>
<dbReference type="EMBL" id="CP000802">
    <property type="protein sequence ID" value="ABV05928.1"/>
    <property type="molecule type" value="Genomic_DNA"/>
</dbReference>
<dbReference type="RefSeq" id="WP_000854624.1">
    <property type="nucleotide sequence ID" value="NC_009800.1"/>
</dbReference>
<dbReference type="SMR" id="A8A074"/>
<dbReference type="GeneID" id="75202151"/>
<dbReference type="KEGG" id="ecx:EcHS_A1603"/>
<dbReference type="HOGENOM" id="CLU_027324_1_0_6"/>
<dbReference type="UniPathway" id="UPA00246"/>
<dbReference type="GO" id="GO:0005829">
    <property type="term" value="C:cytosol"/>
    <property type="evidence" value="ECO:0007669"/>
    <property type="project" value="TreeGrafter"/>
</dbReference>
<dbReference type="GO" id="GO:0008926">
    <property type="term" value="F:mannitol-1-phosphate 5-dehydrogenase activity"/>
    <property type="evidence" value="ECO:0007669"/>
    <property type="project" value="TreeGrafter"/>
</dbReference>
<dbReference type="GO" id="GO:0009026">
    <property type="term" value="F:tagaturonate reductase activity"/>
    <property type="evidence" value="ECO:0007669"/>
    <property type="project" value="UniProtKB-UniRule"/>
</dbReference>
<dbReference type="GO" id="GO:0019698">
    <property type="term" value="P:D-galacturonate catabolic process"/>
    <property type="evidence" value="ECO:0007669"/>
    <property type="project" value="TreeGrafter"/>
</dbReference>
<dbReference type="GO" id="GO:0019592">
    <property type="term" value="P:mannitol catabolic process"/>
    <property type="evidence" value="ECO:0007669"/>
    <property type="project" value="TreeGrafter"/>
</dbReference>
<dbReference type="FunFam" id="1.10.1040.10:FF:000018">
    <property type="entry name" value="Altronate oxidoreductase"/>
    <property type="match status" value="1"/>
</dbReference>
<dbReference type="FunFam" id="3.40.50.720:FF:000153">
    <property type="entry name" value="Altronate oxidoreductase"/>
    <property type="match status" value="1"/>
</dbReference>
<dbReference type="Gene3D" id="1.10.1040.10">
    <property type="entry name" value="N-(1-d-carboxylethyl)-l-norvaline Dehydrogenase, domain 2"/>
    <property type="match status" value="1"/>
</dbReference>
<dbReference type="Gene3D" id="3.40.50.720">
    <property type="entry name" value="NAD(P)-binding Rossmann-like Domain"/>
    <property type="match status" value="1"/>
</dbReference>
<dbReference type="HAMAP" id="MF_00670">
    <property type="entry name" value="Altron_oxidoreduct"/>
    <property type="match status" value="1"/>
</dbReference>
<dbReference type="InterPro" id="IPR008927">
    <property type="entry name" value="6-PGluconate_DH-like_C_sf"/>
</dbReference>
<dbReference type="InterPro" id="IPR013328">
    <property type="entry name" value="6PGD_dom2"/>
</dbReference>
<dbReference type="InterPro" id="IPR023668">
    <property type="entry name" value="Altronate_OxRdtase"/>
</dbReference>
<dbReference type="InterPro" id="IPR013118">
    <property type="entry name" value="Mannitol_DH_C"/>
</dbReference>
<dbReference type="InterPro" id="IPR013131">
    <property type="entry name" value="Mannitol_DH_N"/>
</dbReference>
<dbReference type="InterPro" id="IPR036291">
    <property type="entry name" value="NAD(P)-bd_dom_sf"/>
</dbReference>
<dbReference type="NCBIfam" id="NF002969">
    <property type="entry name" value="PRK03643.1"/>
    <property type="match status" value="1"/>
</dbReference>
<dbReference type="PANTHER" id="PTHR30524:SF0">
    <property type="entry name" value="ALTRONATE OXIDOREDUCTASE-RELATED"/>
    <property type="match status" value="1"/>
</dbReference>
<dbReference type="PANTHER" id="PTHR30524">
    <property type="entry name" value="MANNITOL-1-PHOSPHATE 5-DEHYDROGENASE"/>
    <property type="match status" value="1"/>
</dbReference>
<dbReference type="Pfam" id="PF01232">
    <property type="entry name" value="Mannitol_dh"/>
    <property type="match status" value="1"/>
</dbReference>
<dbReference type="Pfam" id="PF08125">
    <property type="entry name" value="Mannitol_dh_C"/>
    <property type="match status" value="1"/>
</dbReference>
<dbReference type="SUPFAM" id="SSF48179">
    <property type="entry name" value="6-phosphogluconate dehydrogenase C-terminal domain-like"/>
    <property type="match status" value="1"/>
</dbReference>
<dbReference type="SUPFAM" id="SSF51735">
    <property type="entry name" value="NAD(P)-binding Rossmann-fold domains"/>
    <property type="match status" value="1"/>
</dbReference>
<feature type="chain" id="PRO_1000061932" description="Altronate oxidoreductase">
    <location>
        <begin position="1"/>
        <end position="483"/>
    </location>
</feature>
<feature type="binding site" evidence="1">
    <location>
        <begin position="18"/>
        <end position="29"/>
    </location>
    <ligand>
        <name>NAD(+)</name>
        <dbReference type="ChEBI" id="CHEBI:57540"/>
    </ligand>
</feature>
<name>UXAB_ECOHS</name>
<proteinExistence type="inferred from homology"/>
<accession>A8A074</accession>
<evidence type="ECO:0000255" key="1">
    <source>
        <dbReference type="HAMAP-Rule" id="MF_00670"/>
    </source>
</evidence>
<organism>
    <name type="scientific">Escherichia coli O9:H4 (strain HS)</name>
    <dbReference type="NCBI Taxonomy" id="331112"/>
    <lineage>
        <taxon>Bacteria</taxon>
        <taxon>Pseudomonadati</taxon>
        <taxon>Pseudomonadota</taxon>
        <taxon>Gammaproteobacteria</taxon>
        <taxon>Enterobacterales</taxon>
        <taxon>Enterobacteriaceae</taxon>
        <taxon>Escherichia</taxon>
    </lineage>
</organism>
<sequence length="483" mass="54822">MKTLNRRDFPGAQYPERIIQFGEGNFLRAFVDWQIDLLNEHTDLNSGVVVVRPIETSFPPSLSTQDGLYTTIIRGLNEKGEAVSDARLIRSVNREISVYSEYDEFLKLAHNPEMRFVFSNTTEAGISYHAGDKFDDAPAVSYPAKLTRLLFERFSHFNGALDKGWIIIPCELIDYNGDALRELVLRYAQEWALPEAFIQWLDQANSFCSTLVDRIVTGYPRDEVAKLEEELGYHDGFLDTAEHFYLFVIQGPKSLATELRLDKYPLNVLIVDDIKPYKERKVAILNGAHTALVPVAFQAGLDTVGEAMNDAEICAFVEKAIYEEIIPVLDLPRDELESFASAVTGRFRNPYIKHQLLSIALNGMTKFRTRILPQLLAGQKAKGTLPARLTFALAALIAFYRGERNGETYPVQDDAHWLERYQQLWSQHRDRVIGTQELVAIVLAEKDHWEQDLTQVPGLVEQVANDLDAILEKGMREAVRPLC</sequence>
<keyword id="KW-0520">NAD</keyword>
<keyword id="KW-0560">Oxidoreductase</keyword>